<sequence>MFSWVSKDARRKKEPELFQTVSEGLRQLYAQKLLPLEEHYRFHEFHSPALEDADFDNKPMVLLVGQYSTGKTTFIRHLIEQDFPGMRIGPEPTTDSFIAVMHGPTEGVVPGNALVVDPRRPFRKLNAFGNAFLNRFMCAQLPNPVLDSISIIDTPGILSGEKQRISRGYDFAAVLEWFAERVDRIILLFDAHKLDISDEFSEVIKALKNHEDKIRVVLNKADQIETQQLMRVYGALMWSLGKIINTPEVVRVYIGSFWSHPLLIPDNRKLFEAEEQDLFKDIQSLPRNAALRKLNDLIKRARLAKVHAYIISSLKKEMPNVFGKESKKKELVNNLGEIYQKIEREHQISPGDFPNLRKMQELLQTQDFSKFQALKPKLLDTVDDMLANDIARLMVMVRQEESLMPAQVVKGGAFDGTMNGPFGHGYGEGAGEGIDDVEWVVGKDKPTYDEIFYTLSPVNGKITGANAKKEMVKSKLPNTVLGKIWKLADVDRDGLLDDEEFALANHLIKVKLEGHELPADLPPHLVPPSKRRHE</sequence>
<gene>
    <name evidence="3" type="primary">EHD1</name>
</gene>
<feature type="chain" id="PRO_0000306856" description="EH domain-containing protein 1">
    <location>
        <begin position="1"/>
        <end position="534"/>
    </location>
</feature>
<feature type="domain" description="Dynamin-type G" evidence="8">
    <location>
        <begin position="55"/>
        <end position="286"/>
    </location>
</feature>
<feature type="domain" description="EH" evidence="6">
    <location>
        <begin position="444"/>
        <end position="532"/>
    </location>
</feature>
<feature type="domain" description="EF-hand" evidence="7">
    <location>
        <begin position="476"/>
        <end position="511"/>
    </location>
</feature>
<feature type="region of interest" description="G1 motif" evidence="8">
    <location>
        <begin position="65"/>
        <end position="72"/>
    </location>
</feature>
<feature type="region of interest" description="G2 motif" evidence="8">
    <location>
        <begin position="91"/>
        <end position="92"/>
    </location>
</feature>
<feature type="region of interest" description="G3 motif" evidence="8">
    <location>
        <begin position="153"/>
        <end position="156"/>
    </location>
</feature>
<feature type="region of interest" description="G4 motif" evidence="8">
    <location>
        <begin position="219"/>
        <end position="222"/>
    </location>
</feature>
<feature type="region of interest" description="G5 motif" evidence="8">
    <location>
        <position position="243"/>
    </location>
</feature>
<feature type="coiled-coil region" evidence="5">
    <location>
        <begin position="198"/>
        <end position="227"/>
    </location>
</feature>
<feature type="binding site" evidence="3">
    <location>
        <begin position="65"/>
        <end position="72"/>
    </location>
    <ligand>
        <name>ATP</name>
        <dbReference type="ChEBI" id="CHEBI:30616"/>
    </ligand>
</feature>
<feature type="binding site" evidence="2">
    <location>
        <position position="220"/>
    </location>
    <ligand>
        <name>ATP</name>
        <dbReference type="ChEBI" id="CHEBI:30616"/>
    </ligand>
</feature>
<feature type="binding site" evidence="2">
    <location>
        <position position="258"/>
    </location>
    <ligand>
        <name>ATP</name>
        <dbReference type="ChEBI" id="CHEBI:30616"/>
    </ligand>
</feature>
<feature type="binding site" evidence="7">
    <location>
        <position position="489"/>
    </location>
    <ligand>
        <name>Ca(2+)</name>
        <dbReference type="ChEBI" id="CHEBI:29108"/>
    </ligand>
</feature>
<feature type="binding site" evidence="7">
    <location>
        <position position="491"/>
    </location>
    <ligand>
        <name>Ca(2+)</name>
        <dbReference type="ChEBI" id="CHEBI:29108"/>
    </ligand>
</feature>
<feature type="binding site" evidence="7">
    <location>
        <position position="493"/>
    </location>
    <ligand>
        <name>Ca(2+)</name>
        <dbReference type="ChEBI" id="CHEBI:29108"/>
    </ligand>
</feature>
<feature type="binding site" evidence="7">
    <location>
        <position position="500"/>
    </location>
    <ligand>
        <name>Ca(2+)</name>
        <dbReference type="ChEBI" id="CHEBI:29108"/>
    </ligand>
</feature>
<feature type="modified residue" description="N-acetylmethionine" evidence="3">
    <location>
        <position position="1"/>
    </location>
</feature>
<feature type="modified residue" description="Phosphoserine" evidence="3">
    <location>
        <position position="456"/>
    </location>
</feature>
<dbReference type="EMBL" id="BT020857">
    <property type="protein sequence ID" value="AAX08874.1"/>
    <property type="molecule type" value="mRNA"/>
</dbReference>
<dbReference type="EMBL" id="BT026150">
    <property type="protein sequence ID" value="ABG66989.1"/>
    <property type="molecule type" value="mRNA"/>
</dbReference>
<dbReference type="EMBL" id="BC114841">
    <property type="protein sequence ID" value="AAI14842.2"/>
    <property type="molecule type" value="mRNA"/>
</dbReference>
<dbReference type="RefSeq" id="NP_001015578.1">
    <property type="nucleotide sequence ID" value="NM_001015578.1"/>
</dbReference>
<dbReference type="BMRB" id="Q5E9R3"/>
<dbReference type="SMR" id="Q5E9R3"/>
<dbReference type="FunCoup" id="Q5E9R3">
    <property type="interactions" value="2364"/>
</dbReference>
<dbReference type="STRING" id="9913.ENSBTAP00000068009"/>
<dbReference type="PaxDb" id="9913-ENSBTAP00000002174"/>
<dbReference type="GeneID" id="511908"/>
<dbReference type="KEGG" id="bta:511908"/>
<dbReference type="CTD" id="10938"/>
<dbReference type="VEuPathDB" id="HostDB:ENSBTAG00000050712"/>
<dbReference type="eggNOG" id="KOG1954">
    <property type="taxonomic scope" value="Eukaryota"/>
</dbReference>
<dbReference type="InParanoid" id="Q5E9R3"/>
<dbReference type="OMA" id="PFLKVHK"/>
<dbReference type="OrthoDB" id="1716625at2759"/>
<dbReference type="Reactome" id="R-BTA-983231">
    <property type="pathway name" value="Factors involved in megakaryocyte development and platelet production"/>
</dbReference>
<dbReference type="Proteomes" id="UP000009136">
    <property type="component" value="Chromosome 29"/>
</dbReference>
<dbReference type="Bgee" id="ENSBTAG00000050712">
    <property type="expression patterns" value="Expressed in neutrophil and 103 other cell types or tissues"/>
</dbReference>
<dbReference type="GO" id="GO:0020018">
    <property type="term" value="C:ciliary pocket membrane"/>
    <property type="evidence" value="ECO:0000250"/>
    <property type="project" value="UniProtKB"/>
</dbReference>
<dbReference type="GO" id="GO:0005929">
    <property type="term" value="C:cilium"/>
    <property type="evidence" value="ECO:0000250"/>
    <property type="project" value="UniProtKB"/>
</dbReference>
<dbReference type="GO" id="GO:0005737">
    <property type="term" value="C:cytoplasm"/>
    <property type="evidence" value="ECO:0000318"/>
    <property type="project" value="GO_Central"/>
</dbReference>
<dbReference type="GO" id="GO:0005769">
    <property type="term" value="C:early endosome"/>
    <property type="evidence" value="ECO:0000318"/>
    <property type="project" value="GO_Central"/>
</dbReference>
<dbReference type="GO" id="GO:0031901">
    <property type="term" value="C:early endosome membrane"/>
    <property type="evidence" value="ECO:0000250"/>
    <property type="project" value="UniProtKB"/>
</dbReference>
<dbReference type="GO" id="GO:0030139">
    <property type="term" value="C:endocytic vesicle"/>
    <property type="evidence" value="ECO:0000318"/>
    <property type="project" value="GO_Central"/>
</dbReference>
<dbReference type="GO" id="GO:0010008">
    <property type="term" value="C:endosome membrane"/>
    <property type="evidence" value="ECO:0000250"/>
    <property type="project" value="UniProtKB"/>
</dbReference>
<dbReference type="GO" id="GO:0048471">
    <property type="term" value="C:perinuclear region of cytoplasm"/>
    <property type="evidence" value="ECO:0000318"/>
    <property type="project" value="GO_Central"/>
</dbReference>
<dbReference type="GO" id="GO:0005886">
    <property type="term" value="C:plasma membrane"/>
    <property type="evidence" value="ECO:0000250"/>
    <property type="project" value="UniProtKB"/>
</dbReference>
<dbReference type="GO" id="GO:0055038">
    <property type="term" value="C:recycling endosome membrane"/>
    <property type="evidence" value="ECO:0000250"/>
    <property type="project" value="UniProtKB"/>
</dbReference>
<dbReference type="GO" id="GO:0005524">
    <property type="term" value="F:ATP binding"/>
    <property type="evidence" value="ECO:0007669"/>
    <property type="project" value="UniProtKB-KW"/>
</dbReference>
<dbReference type="GO" id="GO:0005509">
    <property type="term" value="F:calcium ion binding"/>
    <property type="evidence" value="ECO:0007669"/>
    <property type="project" value="InterPro"/>
</dbReference>
<dbReference type="GO" id="GO:0005525">
    <property type="term" value="F:GTP binding"/>
    <property type="evidence" value="ECO:0007669"/>
    <property type="project" value="InterPro"/>
</dbReference>
<dbReference type="GO" id="GO:1990090">
    <property type="term" value="P:cellular response to nerve growth factor stimulus"/>
    <property type="evidence" value="ECO:0000250"/>
    <property type="project" value="UniProtKB"/>
</dbReference>
<dbReference type="GO" id="GO:0060271">
    <property type="term" value="P:cilium assembly"/>
    <property type="evidence" value="ECO:0000250"/>
    <property type="project" value="UniProtKB"/>
</dbReference>
<dbReference type="GO" id="GO:0032456">
    <property type="term" value="P:endocytic recycling"/>
    <property type="evidence" value="ECO:0000250"/>
    <property type="project" value="UniProtKB"/>
</dbReference>
<dbReference type="GO" id="GO:0006897">
    <property type="term" value="P:endocytosis"/>
    <property type="evidence" value="ECO:0000250"/>
    <property type="project" value="UniProtKB"/>
</dbReference>
<dbReference type="GO" id="GO:0006886">
    <property type="term" value="P:intracellular protein transport"/>
    <property type="evidence" value="ECO:0000250"/>
    <property type="project" value="UniProtKB"/>
</dbReference>
<dbReference type="GO" id="GO:0031175">
    <property type="term" value="P:neuron projection development"/>
    <property type="evidence" value="ECO:0000250"/>
    <property type="project" value="UniProtKB"/>
</dbReference>
<dbReference type="GO" id="GO:2001137">
    <property type="term" value="P:positive regulation of endocytic recycling"/>
    <property type="evidence" value="ECO:0000250"/>
    <property type="project" value="UniProtKB"/>
</dbReference>
<dbReference type="GO" id="GO:1901741">
    <property type="term" value="P:positive regulation of myoblast fusion"/>
    <property type="evidence" value="ECO:0000250"/>
    <property type="project" value="UniProtKB"/>
</dbReference>
<dbReference type="GO" id="GO:0061512">
    <property type="term" value="P:protein localization to cilium"/>
    <property type="evidence" value="ECO:0000250"/>
    <property type="project" value="UniProtKB"/>
</dbReference>
<dbReference type="GO" id="GO:0072659">
    <property type="term" value="P:protein localization to plasma membrane"/>
    <property type="evidence" value="ECO:0000318"/>
    <property type="project" value="GO_Central"/>
</dbReference>
<dbReference type="CDD" id="cd00052">
    <property type="entry name" value="EH"/>
    <property type="match status" value="1"/>
</dbReference>
<dbReference type="CDD" id="cd09913">
    <property type="entry name" value="EHD"/>
    <property type="match status" value="1"/>
</dbReference>
<dbReference type="FunFam" id="3.40.50.300:FF:000147">
    <property type="entry name" value="EH domain-containing protein 1"/>
    <property type="match status" value="1"/>
</dbReference>
<dbReference type="FunFam" id="1.10.238.10:FF:000038">
    <property type="entry name" value="EH domain-containing protein 3"/>
    <property type="match status" value="1"/>
</dbReference>
<dbReference type="Gene3D" id="1.10.268.20">
    <property type="match status" value="1"/>
</dbReference>
<dbReference type="Gene3D" id="1.10.238.10">
    <property type="entry name" value="EF-hand"/>
    <property type="match status" value="1"/>
</dbReference>
<dbReference type="Gene3D" id="3.40.50.300">
    <property type="entry name" value="P-loop containing nucleotide triphosphate hydrolases"/>
    <property type="match status" value="1"/>
</dbReference>
<dbReference type="InterPro" id="IPR040990">
    <property type="entry name" value="DUF5600"/>
</dbReference>
<dbReference type="InterPro" id="IPR045063">
    <property type="entry name" value="Dynamin_N"/>
</dbReference>
<dbReference type="InterPro" id="IPR011992">
    <property type="entry name" value="EF-hand-dom_pair"/>
</dbReference>
<dbReference type="InterPro" id="IPR018247">
    <property type="entry name" value="EF_Hand_1_Ca_BS"/>
</dbReference>
<dbReference type="InterPro" id="IPR002048">
    <property type="entry name" value="EF_hand_dom"/>
</dbReference>
<dbReference type="InterPro" id="IPR000261">
    <property type="entry name" value="EH_dom"/>
</dbReference>
<dbReference type="InterPro" id="IPR031692">
    <property type="entry name" value="EHD_N"/>
</dbReference>
<dbReference type="InterPro" id="IPR030381">
    <property type="entry name" value="G_DYNAMIN_dom"/>
</dbReference>
<dbReference type="InterPro" id="IPR027417">
    <property type="entry name" value="P-loop_NTPase"/>
</dbReference>
<dbReference type="PANTHER" id="PTHR11216:SF170">
    <property type="entry name" value="DYNAMIN ASSOCIATED PROTEIN 160, ISOFORM D"/>
    <property type="match status" value="1"/>
</dbReference>
<dbReference type="PANTHER" id="PTHR11216">
    <property type="entry name" value="EH DOMAIN"/>
    <property type="match status" value="1"/>
</dbReference>
<dbReference type="Pfam" id="PF18150">
    <property type="entry name" value="DUF5600"/>
    <property type="match status" value="1"/>
</dbReference>
<dbReference type="Pfam" id="PF00350">
    <property type="entry name" value="Dynamin_N"/>
    <property type="match status" value="1"/>
</dbReference>
<dbReference type="Pfam" id="PF12763">
    <property type="entry name" value="EH"/>
    <property type="match status" value="1"/>
</dbReference>
<dbReference type="Pfam" id="PF16880">
    <property type="entry name" value="EHD_N"/>
    <property type="match status" value="1"/>
</dbReference>
<dbReference type="SMART" id="SM00027">
    <property type="entry name" value="EH"/>
    <property type="match status" value="1"/>
</dbReference>
<dbReference type="SUPFAM" id="SSF47473">
    <property type="entry name" value="EF-hand"/>
    <property type="match status" value="1"/>
</dbReference>
<dbReference type="SUPFAM" id="SSF52540">
    <property type="entry name" value="P-loop containing nucleoside triphosphate hydrolases"/>
    <property type="match status" value="1"/>
</dbReference>
<dbReference type="PROSITE" id="PS00018">
    <property type="entry name" value="EF_HAND_1"/>
    <property type="match status" value="1"/>
</dbReference>
<dbReference type="PROSITE" id="PS50222">
    <property type="entry name" value="EF_HAND_2"/>
    <property type="match status" value="1"/>
</dbReference>
<dbReference type="PROSITE" id="PS50031">
    <property type="entry name" value="EH"/>
    <property type="match status" value="1"/>
</dbReference>
<dbReference type="PROSITE" id="PS51718">
    <property type="entry name" value="G_DYNAMIN_2"/>
    <property type="match status" value="1"/>
</dbReference>
<accession>Q5E9R3</accession>
<accession>Q0V8R8</accession>
<accession>Q1RMK8</accession>
<evidence type="ECO:0000250" key="1">
    <source>
        <dbReference type="UniProtKB" id="Q641Z6"/>
    </source>
</evidence>
<evidence type="ECO:0000250" key="2">
    <source>
        <dbReference type="UniProtKB" id="Q8BH64"/>
    </source>
</evidence>
<evidence type="ECO:0000250" key="3">
    <source>
        <dbReference type="UniProtKB" id="Q9H4M9"/>
    </source>
</evidence>
<evidence type="ECO:0000250" key="4">
    <source>
        <dbReference type="UniProtKB" id="Q9WVK4"/>
    </source>
</evidence>
<evidence type="ECO:0000255" key="5"/>
<evidence type="ECO:0000255" key="6">
    <source>
        <dbReference type="PROSITE-ProRule" id="PRU00077"/>
    </source>
</evidence>
<evidence type="ECO:0000255" key="7">
    <source>
        <dbReference type="PROSITE-ProRule" id="PRU00448"/>
    </source>
</evidence>
<evidence type="ECO:0000255" key="8">
    <source>
        <dbReference type="PROSITE-ProRule" id="PRU01055"/>
    </source>
</evidence>
<evidence type="ECO:0000269" key="9">
    <source>
    </source>
</evidence>
<evidence type="ECO:0000269" key="10">
    <source>
    </source>
</evidence>
<evidence type="ECO:0000305" key="11"/>
<comment type="function">
    <text evidence="1 3 4">ATP- and membrane-binding protein that controls membrane reorganization/tubulation upon ATP hydrolysis. Acts in early endocytic membrane fusion and membrane trafficking of recycling endosomes. Recruited to endosomal membranes upon nerve growth factor stimulation, indirectly regulates neurite outgrowth. Plays a role in myoblast fusion. Involved in the unidirectional retrograde dendritic transport of endocytosed BACE1 and in efficient sorting of BACE1 to axons implicating a function in neuronal APP processing. Plays a role in the formation of the ciliary vesicle (CV), an early step in cilium biogenesis. Proposed to be required for the fusion of distal appendage vesicles (DAVs) to form the CV by recruiting SNARE complex component SNAP29. Is required for recruitment of transition zone proteins CEP290, RPGRIP1L, TMEM67 and B9D2, and of IFT20 following DAV reorganization before Rab8-dependent ciliary membrane extension. Required for the loss of CCP110 form the mother centriole essential for the maturation of the basal body during ciliogenesis.</text>
</comment>
<comment type="subunit">
    <text evidence="3 4 9 10">Homooligomer, and heterooligomer with EHD2, EHD3 and EHD4, ATP-binding is required for heterooligomerization (By similarity). Interacts (via EH domain) with MICALL1 (via NPF1 motif); the interaction is direct and recruits EHD1 to membranes (PubMed:19864458). Interacts with RAB35; the interaction is indirect through MICALL1 and recruits EHD1 to membranes (By similarity). Interacts (via EH domain) with PACSIN2 (via NPF motifs); regulates localization to tubular recycling endosome membranes (PubMed:23596323). Interacts with PACSIN1 (By similarity). Interacts with RAB8A (By similarity). Interacts with FER1L5 (via second C2 domain) (By similarity). Interacts with MYOF (By similarity). Interacts with ZFYVE20 (By similarity). Interacts (via EH domain) with RAB11FIP2 (By similarity).</text>
</comment>
<comment type="subcellular location">
    <subcellularLocation>
        <location evidence="3">Recycling endosome membrane</location>
        <topology evidence="11">Peripheral membrane protein</topology>
        <orientation evidence="11">Cytoplasmic side</orientation>
    </subcellularLocation>
    <subcellularLocation>
        <location evidence="3">Early endosome membrane</location>
        <topology evidence="11">Peripheral membrane protein</topology>
        <orientation evidence="11">Cytoplasmic side</orientation>
    </subcellularLocation>
    <subcellularLocation>
        <location evidence="3">Cell membrane</location>
        <topology evidence="11">Peripheral membrane protein</topology>
        <orientation evidence="11">Cytoplasmic side</orientation>
    </subcellularLocation>
    <subcellularLocation>
        <location evidence="3">Cell projection</location>
        <location evidence="3">Cilium membrane</location>
        <topology evidence="11">Peripheral membrane protein</topology>
        <orientation evidence="11">Cytoplasmic side</orientation>
    </subcellularLocation>
    <text evidence="3 4">Preferentially associates with tubular recycling endosomes (By similarity). Colocalizes with FER1L5 at plasma membrane in myoblasts and myotubes (By similarity). Localizes to the ciliary pocket from where the cilium protrudes (By similarity). Colocalizes with BACE1 in tubulovesicular cytoplasmic membranes. Colocalizes with BACE1 and APP amyloid beta proteins in hippocampal mossy fiber terminals (By similarity).</text>
</comment>
<comment type="domain">
    <text evidence="4">The EH domain interacts with Asn-Pro-Phe (NPF) motifs of target proteins.</text>
</comment>
<comment type="similarity">
    <text evidence="8">Belongs to the TRAFAC class dynamin-like GTPase superfamily. Dynamin/Fzo/YdjA family. EHD subfamily.</text>
</comment>
<name>EHD1_BOVIN</name>
<reference key="1">
    <citation type="journal article" date="2005" name="BMC Genomics">
        <title>Characterization of 954 bovine full-CDS cDNA sequences.</title>
        <authorList>
            <person name="Harhay G.P."/>
            <person name="Sonstegard T.S."/>
            <person name="Keele J.W."/>
            <person name="Heaton M.P."/>
            <person name="Clawson M.L."/>
            <person name="Snelling W.M."/>
            <person name="Wiedmann R.T."/>
            <person name="Van Tassell C.P."/>
            <person name="Smith T.P.L."/>
        </authorList>
    </citation>
    <scope>NUCLEOTIDE SEQUENCE [LARGE SCALE MRNA]</scope>
</reference>
<reference key="2">
    <citation type="submission" date="2006-04" db="EMBL/GenBank/DDBJ databases">
        <authorList>
            <consortium name="NIH - Mammalian Gene Collection (MGC) project"/>
        </authorList>
    </citation>
    <scope>NUCLEOTIDE SEQUENCE [LARGE SCALE MRNA]</scope>
    <source>
        <strain>Crossbred X Angus</strain>
        <tissue>Liver</tissue>
    </source>
</reference>
<reference key="3">
    <citation type="journal article" date="2009" name="Mol. Biol. Cell">
        <title>MICAL-L1 links EHD1 to tubular recycling endosomes and regulates receptor recycling.</title>
        <authorList>
            <person name="Sharma M."/>
            <person name="Giridharan S.S."/>
            <person name="Rahajeng J."/>
            <person name="Naslavsky N."/>
            <person name="Caplan S."/>
        </authorList>
    </citation>
    <scope>INTERACTION WITH MICALL1</scope>
</reference>
<reference key="4">
    <citation type="journal article" date="2013" name="Mol. Biol. Cell">
        <title>Cooperation of MICAL-L1, syndapin2, and phosphatidic acid in tubular recycling endosome biogenesis.</title>
        <authorList>
            <person name="Giridharan S.S."/>
            <person name="Cai B."/>
            <person name="Vitale N."/>
            <person name="Naslavsky N."/>
            <person name="Caplan S."/>
        </authorList>
    </citation>
    <scope>INTERACTION WITH PACSIN2</scope>
</reference>
<protein>
    <recommendedName>
        <fullName evidence="11">EH domain-containing protein 1</fullName>
    </recommendedName>
</protein>
<proteinExistence type="evidence at protein level"/>
<keyword id="KW-0007">Acetylation</keyword>
<keyword id="KW-0067">ATP-binding</keyword>
<keyword id="KW-0106">Calcium</keyword>
<keyword id="KW-1003">Cell membrane</keyword>
<keyword id="KW-0966">Cell projection</keyword>
<keyword id="KW-0969">Cilium</keyword>
<keyword id="KW-0970">Cilium biogenesis/degradation</keyword>
<keyword id="KW-0175">Coiled coil</keyword>
<keyword id="KW-0967">Endosome</keyword>
<keyword id="KW-0472">Membrane</keyword>
<keyword id="KW-0479">Metal-binding</keyword>
<keyword id="KW-0547">Nucleotide-binding</keyword>
<keyword id="KW-0597">Phosphoprotein</keyword>
<keyword id="KW-0653">Protein transport</keyword>
<keyword id="KW-1185">Reference proteome</keyword>
<keyword id="KW-0813">Transport</keyword>
<organism>
    <name type="scientific">Bos taurus</name>
    <name type="common">Bovine</name>
    <dbReference type="NCBI Taxonomy" id="9913"/>
    <lineage>
        <taxon>Eukaryota</taxon>
        <taxon>Metazoa</taxon>
        <taxon>Chordata</taxon>
        <taxon>Craniata</taxon>
        <taxon>Vertebrata</taxon>
        <taxon>Euteleostomi</taxon>
        <taxon>Mammalia</taxon>
        <taxon>Eutheria</taxon>
        <taxon>Laurasiatheria</taxon>
        <taxon>Artiodactyla</taxon>
        <taxon>Ruminantia</taxon>
        <taxon>Pecora</taxon>
        <taxon>Bovidae</taxon>
        <taxon>Bovinae</taxon>
        <taxon>Bos</taxon>
    </lineage>
</organism>